<sequence length="1200" mass="135147">MERNLQKQLYGISRESSPGARRYSMPAASADSTRKSIFGGSASCAQMSGSLKRTALTNSRLSLSVRSTQSIAGIRSDYNSVESFGCPLPVVVNEALTFAGPGAGTVTAKVTQNGWAWVVQGRRLLIWQYKDTAKSGSPPRVGKLARRGGGLAQCRELTLPYSDLGHKSDLISVFQTEGQQMASCIAVSATGEVRYWSSIAHDGNSVDLSILTGQEFVQLLSLPTQQGYLAVTTTCNLVFLRVGLTNGRYTLHHKTIKPATSFLGGFGKKFASILIGMNTGADKDQTLVGMCCESNLESGETIVAVLSDRAIQRWSLSNNGNTENLLYEDADMLRRIREEFITNFWKFRLPADSLEIDLHLLDFHVVKNKAYILAGAVNAAHAPQMCYALVTGTAQAERMLLESFTPLNMNKFFSAKTEEDCLSVRFVVGSSHIYLYTSKVVYPLHLTNSVPTAELEAEKIEFHQHDDRILSAVICSQLPLFFSRTHGLVSITPGDFDGTEMMNMSSCNTPDLYAPNSCNASFAVADHSALTNSTNNLHLFELDPDEMYNELSDEVGQLKAAFLYHMKRNSNMVKTIVDELLRNVTAADPSGAPMDAYKLDRIVITIAEDLAEDIPIADPRWEEALADQEMNRHAIGSSRSMQIINQLRDKIIAFQHFITFLHSSLVWDKLNVIPCGSHSLKPTGCILADISEKIVAAMALRSIQTKLPKLIEEAIDATVALWHEEPQGSLTYQDIFYVKLSRFQNVFEALADIADDRIAAQNQTTISVAHFVNEINSIVLDVLGQVFKYRKQHASSFRLSHEKLPSYENLPWTAMAGSAGVRDTLTRLIDISVRYGSHCVSETELKQQLYQQIFELIDLVLDGRKTYLKSVRDTEKFNVLQQQFEAQRRELISVLIKDRQYEYAAKIAEKYLDFQSLVLICDETQDKERLEDYTRKYEEYDFSQFAINWHLRQNRHGEVFERFKGNQTALAQFMRDHPSLGWIQLIFNGDFERAAKVLYELAQCETEFVARKKSMLSLAKLAAFAAAESDLTAQVEKINADLTLVEYQSQLGHDVLESFGFDPAEQKVLKAEEIISLYIAEENETASETEFRKALELLSYVEQPYDMRHKIWCAAIKRDNWTDYDPNNAVHYMQKLLFYKIIEISQLMGNDSENVLPPMEDFLESVELGDLPQQKPFQYLLKLTYEYVADMFKQPDDMEL</sequence>
<dbReference type="EMBL" id="AE014297">
    <property type="protein sequence ID" value="AAF56042.2"/>
    <property type="molecule type" value="Genomic_DNA"/>
</dbReference>
<dbReference type="EMBL" id="BT003226">
    <property type="protein sequence ID" value="AAO24981.1"/>
    <property type="molecule type" value="mRNA"/>
</dbReference>
<dbReference type="EMBL" id="AY051721">
    <property type="protein sequence ID" value="AAK93145.1"/>
    <property type="status" value="ALT_INIT"/>
    <property type="molecule type" value="mRNA"/>
</dbReference>
<dbReference type="RefSeq" id="NP_651080.2">
    <property type="nucleotide sequence ID" value="NM_142823.3"/>
</dbReference>
<dbReference type="SMR" id="Q9VCW3"/>
<dbReference type="ComplexPortal" id="CPX-2568">
    <property type="entry name" value="Nuclear pore complex"/>
</dbReference>
<dbReference type="FunCoup" id="Q9VCW3">
    <property type="interactions" value="2437"/>
</dbReference>
<dbReference type="IntAct" id="Q9VCW3">
    <property type="interactions" value="6"/>
</dbReference>
<dbReference type="STRING" id="7227.FBpp0083695"/>
<dbReference type="PaxDb" id="7227-FBpp0083695"/>
<dbReference type="DNASU" id="42680"/>
<dbReference type="EnsemblMetazoa" id="FBtr0084302">
    <property type="protein sequence ID" value="FBpp0083695"/>
    <property type="gene ID" value="FBgn0039004"/>
</dbReference>
<dbReference type="GeneID" id="42680"/>
<dbReference type="KEGG" id="dme:Dmel_CG6958"/>
<dbReference type="UCSC" id="CG6958-RA">
    <property type="organism name" value="d. melanogaster"/>
</dbReference>
<dbReference type="AGR" id="FB:FBgn0039004"/>
<dbReference type="CTD" id="55746"/>
<dbReference type="FlyBase" id="FBgn0039004">
    <property type="gene designation" value="Nup133"/>
</dbReference>
<dbReference type="VEuPathDB" id="VectorBase:FBgn0039004"/>
<dbReference type="eggNOG" id="KOG4121">
    <property type="taxonomic scope" value="Eukaryota"/>
</dbReference>
<dbReference type="GeneTree" id="ENSGT00390000011529"/>
<dbReference type="HOGENOM" id="CLU_008593_1_0_1"/>
<dbReference type="InParanoid" id="Q9VCW3"/>
<dbReference type="OMA" id="TRKYEEY"/>
<dbReference type="OrthoDB" id="103454at2759"/>
<dbReference type="PhylomeDB" id="Q9VCW3"/>
<dbReference type="Reactome" id="R-DME-159227">
    <property type="pathway name" value="Transport of the SLBP independent Mature mRNA"/>
</dbReference>
<dbReference type="Reactome" id="R-DME-159230">
    <property type="pathway name" value="Transport of the SLBP Dependant Mature mRNA"/>
</dbReference>
<dbReference type="Reactome" id="R-DME-159231">
    <property type="pathway name" value="Transport of Mature mRNA Derived from an Intronless Transcript"/>
</dbReference>
<dbReference type="Reactome" id="R-DME-159236">
    <property type="pathway name" value="Transport of Mature mRNA derived from an Intron-Containing Transcript"/>
</dbReference>
<dbReference type="Reactome" id="R-DME-3108214">
    <property type="pathway name" value="SUMOylation of DNA damage response and repair proteins"/>
</dbReference>
<dbReference type="Reactome" id="R-DME-3301854">
    <property type="pathway name" value="Nuclear Pore Complex (NPC) Disassembly"/>
</dbReference>
<dbReference type="Reactome" id="R-DME-4085377">
    <property type="pathway name" value="SUMOylation of SUMOylation proteins"/>
</dbReference>
<dbReference type="Reactome" id="R-DME-4551638">
    <property type="pathway name" value="SUMOylation of chromatin organization proteins"/>
</dbReference>
<dbReference type="Reactome" id="R-DME-4615885">
    <property type="pathway name" value="SUMOylation of DNA replication proteins"/>
</dbReference>
<dbReference type="Reactome" id="R-DME-5578749">
    <property type="pathway name" value="Transcriptional regulation by small RNAs"/>
</dbReference>
<dbReference type="Reactome" id="R-DME-9615933">
    <property type="pathway name" value="Postmitotic nuclear pore complex (NPC) reformation"/>
</dbReference>
<dbReference type="BioGRID-ORCS" id="42680">
    <property type="hits" value="0 hits in 1 CRISPR screen"/>
</dbReference>
<dbReference type="GenomeRNAi" id="42680"/>
<dbReference type="PRO" id="PR:Q9VCW3"/>
<dbReference type="Proteomes" id="UP000000803">
    <property type="component" value="Chromosome 3R"/>
</dbReference>
<dbReference type="Bgee" id="FBgn0039004">
    <property type="expression patterns" value="Expressed in eye disc (Drosophila) and 40 other cell types or tissues"/>
</dbReference>
<dbReference type="ExpressionAtlas" id="Q9VCW3">
    <property type="expression patterns" value="baseline and differential"/>
</dbReference>
<dbReference type="GO" id="GO:0031080">
    <property type="term" value="C:nuclear pore outer ring"/>
    <property type="evidence" value="ECO:0000250"/>
    <property type="project" value="FlyBase"/>
</dbReference>
<dbReference type="GO" id="GO:0017056">
    <property type="term" value="F:structural constituent of nuclear pore"/>
    <property type="evidence" value="ECO:0000250"/>
    <property type="project" value="FlyBase"/>
</dbReference>
<dbReference type="GO" id="GO:0006406">
    <property type="term" value="P:mRNA export from nucleus"/>
    <property type="evidence" value="ECO:0000250"/>
    <property type="project" value="FlyBase"/>
</dbReference>
<dbReference type="GO" id="GO:0016973">
    <property type="term" value="P:poly(A)+ mRNA export from nucleus"/>
    <property type="evidence" value="ECO:0000318"/>
    <property type="project" value="GO_Central"/>
</dbReference>
<dbReference type="GO" id="GO:0006606">
    <property type="term" value="P:protein import into nucleus"/>
    <property type="evidence" value="ECO:0000318"/>
    <property type="project" value="GO_Central"/>
</dbReference>
<dbReference type="GO" id="GO:0000972">
    <property type="term" value="P:transcription-dependent tethering of RNA polymerase II gene DNA at nuclear periphery"/>
    <property type="evidence" value="ECO:0000318"/>
    <property type="project" value="GO_Central"/>
</dbReference>
<dbReference type="FunFam" id="1.20.58.1380:FF:000002">
    <property type="entry name" value="Nup133"/>
    <property type="match status" value="1"/>
</dbReference>
<dbReference type="FunFam" id="1.25.40.700:FF:000002">
    <property type="entry name" value="Nup133"/>
    <property type="match status" value="1"/>
</dbReference>
<dbReference type="FunFam" id="2.130.10.10:FF:001001">
    <property type="entry name" value="Nup133"/>
    <property type="match status" value="1"/>
</dbReference>
<dbReference type="Gene3D" id="1.20.58.1380">
    <property type="match status" value="1"/>
</dbReference>
<dbReference type="Gene3D" id="1.25.40.700">
    <property type="match status" value="1"/>
</dbReference>
<dbReference type="Gene3D" id="2.130.10.10">
    <property type="entry name" value="YVTN repeat-like/Quinoprotein amine dehydrogenase"/>
    <property type="match status" value="1"/>
</dbReference>
<dbReference type="InterPro" id="IPR014908">
    <property type="entry name" value="Nucleoporin_Nup133/Nup155_N"/>
</dbReference>
<dbReference type="InterPro" id="IPR037624">
    <property type="entry name" value="Nup133-like"/>
</dbReference>
<dbReference type="InterPro" id="IPR015943">
    <property type="entry name" value="WD40/YVTN_repeat-like_dom_sf"/>
</dbReference>
<dbReference type="PANTHER" id="PTHR13405">
    <property type="entry name" value="NUCLEAR PORE COMPLEX PROTEIN NUP133"/>
    <property type="match status" value="1"/>
</dbReference>
<dbReference type="PANTHER" id="PTHR13405:SF11">
    <property type="entry name" value="NUCLEAR PORE COMPLEX PROTEIN NUP133"/>
    <property type="match status" value="1"/>
</dbReference>
<dbReference type="Pfam" id="PF08801">
    <property type="entry name" value="Nucleoporin_N"/>
    <property type="match status" value="1"/>
</dbReference>
<dbReference type="SUPFAM" id="SSF117289">
    <property type="entry name" value="Nucleoporin domain"/>
    <property type="match status" value="1"/>
</dbReference>
<keyword id="KW-0509">mRNA transport</keyword>
<keyword id="KW-0906">Nuclear pore complex</keyword>
<keyword id="KW-0539">Nucleus</keyword>
<keyword id="KW-0653">Protein transport</keyword>
<keyword id="KW-1185">Reference proteome</keyword>
<keyword id="KW-0811">Translocation</keyword>
<keyword id="KW-0813">Transport</keyword>
<reference evidence="9" key="1">
    <citation type="journal article" date="2000" name="Science">
        <title>The genome sequence of Drosophila melanogaster.</title>
        <authorList>
            <person name="Adams M.D."/>
            <person name="Celniker S.E."/>
            <person name="Holt R.A."/>
            <person name="Evans C.A."/>
            <person name="Gocayne J.D."/>
            <person name="Amanatides P.G."/>
            <person name="Scherer S.E."/>
            <person name="Li P.W."/>
            <person name="Hoskins R.A."/>
            <person name="Galle R.F."/>
            <person name="George R.A."/>
            <person name="Lewis S.E."/>
            <person name="Richards S."/>
            <person name="Ashburner M."/>
            <person name="Henderson S.N."/>
            <person name="Sutton G.G."/>
            <person name="Wortman J.R."/>
            <person name="Yandell M.D."/>
            <person name="Zhang Q."/>
            <person name="Chen L.X."/>
            <person name="Brandon R.C."/>
            <person name="Rogers Y.-H.C."/>
            <person name="Blazej R.G."/>
            <person name="Champe M."/>
            <person name="Pfeiffer B.D."/>
            <person name="Wan K.H."/>
            <person name="Doyle C."/>
            <person name="Baxter E.G."/>
            <person name="Helt G."/>
            <person name="Nelson C.R."/>
            <person name="Miklos G.L.G."/>
            <person name="Abril J.F."/>
            <person name="Agbayani A."/>
            <person name="An H.-J."/>
            <person name="Andrews-Pfannkoch C."/>
            <person name="Baldwin D."/>
            <person name="Ballew R.M."/>
            <person name="Basu A."/>
            <person name="Baxendale J."/>
            <person name="Bayraktaroglu L."/>
            <person name="Beasley E.M."/>
            <person name="Beeson K.Y."/>
            <person name="Benos P.V."/>
            <person name="Berman B.P."/>
            <person name="Bhandari D."/>
            <person name="Bolshakov S."/>
            <person name="Borkova D."/>
            <person name="Botchan M.R."/>
            <person name="Bouck J."/>
            <person name="Brokstein P."/>
            <person name="Brottier P."/>
            <person name="Burtis K.C."/>
            <person name="Busam D.A."/>
            <person name="Butler H."/>
            <person name="Cadieu E."/>
            <person name="Center A."/>
            <person name="Chandra I."/>
            <person name="Cherry J.M."/>
            <person name="Cawley S."/>
            <person name="Dahlke C."/>
            <person name="Davenport L.B."/>
            <person name="Davies P."/>
            <person name="de Pablos B."/>
            <person name="Delcher A."/>
            <person name="Deng Z."/>
            <person name="Mays A.D."/>
            <person name="Dew I."/>
            <person name="Dietz S.M."/>
            <person name="Dodson K."/>
            <person name="Doup L.E."/>
            <person name="Downes M."/>
            <person name="Dugan-Rocha S."/>
            <person name="Dunkov B.C."/>
            <person name="Dunn P."/>
            <person name="Durbin K.J."/>
            <person name="Evangelista C.C."/>
            <person name="Ferraz C."/>
            <person name="Ferriera S."/>
            <person name="Fleischmann W."/>
            <person name="Fosler C."/>
            <person name="Gabrielian A.E."/>
            <person name="Garg N.S."/>
            <person name="Gelbart W.M."/>
            <person name="Glasser K."/>
            <person name="Glodek A."/>
            <person name="Gong F."/>
            <person name="Gorrell J.H."/>
            <person name="Gu Z."/>
            <person name="Guan P."/>
            <person name="Harris M."/>
            <person name="Harris N.L."/>
            <person name="Harvey D.A."/>
            <person name="Heiman T.J."/>
            <person name="Hernandez J.R."/>
            <person name="Houck J."/>
            <person name="Hostin D."/>
            <person name="Houston K.A."/>
            <person name="Howland T.J."/>
            <person name="Wei M.-H."/>
            <person name="Ibegwam C."/>
            <person name="Jalali M."/>
            <person name="Kalush F."/>
            <person name="Karpen G.H."/>
            <person name="Ke Z."/>
            <person name="Kennison J.A."/>
            <person name="Ketchum K.A."/>
            <person name="Kimmel B.E."/>
            <person name="Kodira C.D."/>
            <person name="Kraft C.L."/>
            <person name="Kravitz S."/>
            <person name="Kulp D."/>
            <person name="Lai Z."/>
            <person name="Lasko P."/>
            <person name="Lei Y."/>
            <person name="Levitsky A.A."/>
            <person name="Li J.H."/>
            <person name="Li Z."/>
            <person name="Liang Y."/>
            <person name="Lin X."/>
            <person name="Liu X."/>
            <person name="Mattei B."/>
            <person name="McIntosh T.C."/>
            <person name="McLeod M.P."/>
            <person name="McPherson D."/>
            <person name="Merkulov G."/>
            <person name="Milshina N.V."/>
            <person name="Mobarry C."/>
            <person name="Morris J."/>
            <person name="Moshrefi A."/>
            <person name="Mount S.M."/>
            <person name="Moy M."/>
            <person name="Murphy B."/>
            <person name="Murphy L."/>
            <person name="Muzny D.M."/>
            <person name="Nelson D.L."/>
            <person name="Nelson D.R."/>
            <person name="Nelson K.A."/>
            <person name="Nixon K."/>
            <person name="Nusskern D.R."/>
            <person name="Pacleb J.M."/>
            <person name="Palazzolo M."/>
            <person name="Pittman G.S."/>
            <person name="Pan S."/>
            <person name="Pollard J."/>
            <person name="Puri V."/>
            <person name="Reese M.G."/>
            <person name="Reinert K."/>
            <person name="Remington K."/>
            <person name="Saunders R.D.C."/>
            <person name="Scheeler F."/>
            <person name="Shen H."/>
            <person name="Shue B.C."/>
            <person name="Siden-Kiamos I."/>
            <person name="Simpson M."/>
            <person name="Skupski M.P."/>
            <person name="Smith T.J."/>
            <person name="Spier E."/>
            <person name="Spradling A.C."/>
            <person name="Stapleton M."/>
            <person name="Strong R."/>
            <person name="Sun E."/>
            <person name="Svirskas R."/>
            <person name="Tector C."/>
            <person name="Turner R."/>
            <person name="Venter E."/>
            <person name="Wang A.H."/>
            <person name="Wang X."/>
            <person name="Wang Z.-Y."/>
            <person name="Wassarman D.A."/>
            <person name="Weinstock G.M."/>
            <person name="Weissenbach J."/>
            <person name="Williams S.M."/>
            <person name="Woodage T."/>
            <person name="Worley K.C."/>
            <person name="Wu D."/>
            <person name="Yang S."/>
            <person name="Yao Q.A."/>
            <person name="Ye J."/>
            <person name="Yeh R.-F."/>
            <person name="Zaveri J.S."/>
            <person name="Zhan M."/>
            <person name="Zhang G."/>
            <person name="Zhao Q."/>
            <person name="Zheng L."/>
            <person name="Zheng X.H."/>
            <person name="Zhong F.N."/>
            <person name="Zhong W."/>
            <person name="Zhou X."/>
            <person name="Zhu S.C."/>
            <person name="Zhu X."/>
            <person name="Smith H.O."/>
            <person name="Gibbs R.A."/>
            <person name="Myers E.W."/>
            <person name="Rubin G.M."/>
            <person name="Venter J.C."/>
        </authorList>
    </citation>
    <scope>NUCLEOTIDE SEQUENCE [LARGE SCALE GENOMIC DNA]</scope>
    <source>
        <strain evidence="9">Berkeley</strain>
    </source>
</reference>
<reference evidence="9" key="2">
    <citation type="journal article" date="2002" name="Genome Biol.">
        <title>Annotation of the Drosophila melanogaster euchromatic genome: a systematic review.</title>
        <authorList>
            <person name="Misra S."/>
            <person name="Crosby M.A."/>
            <person name="Mungall C.J."/>
            <person name="Matthews B.B."/>
            <person name="Campbell K.S."/>
            <person name="Hradecky P."/>
            <person name="Huang Y."/>
            <person name="Kaminker J.S."/>
            <person name="Millburn G.H."/>
            <person name="Prochnik S.E."/>
            <person name="Smith C.D."/>
            <person name="Tupy J.L."/>
            <person name="Whitfield E.J."/>
            <person name="Bayraktaroglu L."/>
            <person name="Berman B.P."/>
            <person name="Bettencourt B.R."/>
            <person name="Celniker S.E."/>
            <person name="de Grey A.D.N.J."/>
            <person name="Drysdale R.A."/>
            <person name="Harris N.L."/>
            <person name="Richter J."/>
            <person name="Russo S."/>
            <person name="Schroeder A.J."/>
            <person name="Shu S.Q."/>
            <person name="Stapleton M."/>
            <person name="Yamada C."/>
            <person name="Ashburner M."/>
            <person name="Gelbart W.M."/>
            <person name="Rubin G.M."/>
            <person name="Lewis S.E."/>
        </authorList>
    </citation>
    <scope>GENOME REANNOTATION</scope>
    <source>
        <strain evidence="9">Berkeley</strain>
    </source>
</reference>
<reference evidence="7" key="3">
    <citation type="submission" date="2003-01" db="EMBL/GenBank/DDBJ databases">
        <authorList>
            <person name="Stapleton M."/>
            <person name="Brokstein P."/>
            <person name="Hong L."/>
            <person name="Agbayani A."/>
            <person name="Carlson J."/>
            <person name="Champe M."/>
            <person name="Chavez C."/>
            <person name="Dorsett V."/>
            <person name="Dresnek D."/>
            <person name="Farfan D."/>
            <person name="Frise E."/>
            <person name="George R."/>
            <person name="Gonzalez M."/>
            <person name="Guarin H."/>
            <person name="Kronmiller B."/>
            <person name="Li P."/>
            <person name="Liao G."/>
            <person name="Miranda A."/>
            <person name="Mungall C.J."/>
            <person name="Nunoo J."/>
            <person name="Pacleb J."/>
            <person name="Paragas V."/>
            <person name="Park S."/>
            <person name="Patel S."/>
            <person name="Phouanenavong S."/>
            <person name="Wan K."/>
            <person name="Yu C."/>
            <person name="Lewis S.E."/>
            <person name="Rubin G.M."/>
            <person name="Celniker S."/>
        </authorList>
    </citation>
    <scope>NUCLEOTIDE SEQUENCE [LARGE SCALE MRNA]</scope>
    <source>
        <strain evidence="7">Berkeley</strain>
        <tissue evidence="7">Larva</tissue>
        <tissue evidence="7">Pupae</tissue>
    </source>
</reference>
<reference evidence="6" key="4">
    <citation type="journal article" date="2002" name="Genome Biol.">
        <title>A Drosophila full-length cDNA resource.</title>
        <authorList>
            <person name="Stapleton M."/>
            <person name="Carlson J.W."/>
            <person name="Brokstein P."/>
            <person name="Yu C."/>
            <person name="Champe M."/>
            <person name="George R.A."/>
            <person name="Guarin H."/>
            <person name="Kronmiller B."/>
            <person name="Pacleb J.M."/>
            <person name="Park S."/>
            <person name="Wan K.H."/>
            <person name="Rubin G.M."/>
            <person name="Celniker S.E."/>
        </authorList>
    </citation>
    <scope>NUCLEOTIDE SEQUENCE [LARGE SCALE MRNA] OF 109-1200</scope>
    <source>
        <strain evidence="6">Berkeley</strain>
        <tissue evidence="6">Embryo</tissue>
    </source>
</reference>
<reference evidence="5" key="5">
    <citation type="journal article" date="2010" name="Mol. Cell. Biol.">
        <title>Specific nucleoporin requirement for Smad nuclear translocation.</title>
        <authorList>
            <person name="Chen X."/>
            <person name="Xu L."/>
        </authorList>
    </citation>
    <scope>FUNCTION</scope>
</reference>
<proteinExistence type="evidence at transcript level"/>
<feature type="chain" id="PRO_0000440691" description="Nuclear pore complex protein Nup133">
    <location>
        <begin position="1"/>
        <end position="1200"/>
    </location>
</feature>
<feature type="region of interest" description="Disordered" evidence="2">
    <location>
        <begin position="1"/>
        <end position="28"/>
    </location>
</feature>
<accession>Q9VCW3</accession>
<accession>Q86PB8</accession>
<accession>Q961A9</accession>
<organism evidence="9">
    <name type="scientific">Drosophila melanogaster</name>
    <name type="common">Fruit fly</name>
    <dbReference type="NCBI Taxonomy" id="7227"/>
    <lineage>
        <taxon>Eukaryota</taxon>
        <taxon>Metazoa</taxon>
        <taxon>Ecdysozoa</taxon>
        <taxon>Arthropoda</taxon>
        <taxon>Hexapoda</taxon>
        <taxon>Insecta</taxon>
        <taxon>Pterygota</taxon>
        <taxon>Neoptera</taxon>
        <taxon>Endopterygota</taxon>
        <taxon>Diptera</taxon>
        <taxon>Brachycera</taxon>
        <taxon>Muscomorpha</taxon>
        <taxon>Ephydroidea</taxon>
        <taxon>Drosophilidae</taxon>
        <taxon>Drosophila</taxon>
        <taxon>Sophophora</taxon>
    </lineage>
</organism>
<name>NU133_DROME</name>
<evidence type="ECO:0000250" key="1">
    <source>
        <dbReference type="UniProtKB" id="Q8WUM0"/>
    </source>
</evidence>
<evidence type="ECO:0000256" key="2">
    <source>
        <dbReference type="SAM" id="MobiDB-lite"/>
    </source>
</evidence>
<evidence type="ECO:0000269" key="3">
    <source>
    </source>
</evidence>
<evidence type="ECO:0000303" key="4">
    <source>
    </source>
</evidence>
<evidence type="ECO:0000305" key="5"/>
<evidence type="ECO:0000312" key="6">
    <source>
        <dbReference type="EMBL" id="AAK93145.1"/>
    </source>
</evidence>
<evidence type="ECO:0000312" key="7">
    <source>
        <dbReference type="EMBL" id="AAO24981.1"/>
    </source>
</evidence>
<evidence type="ECO:0000312" key="8">
    <source>
        <dbReference type="FlyBase" id="FBgn0039004"/>
    </source>
</evidence>
<evidence type="ECO:0000312" key="9">
    <source>
        <dbReference type="Proteomes" id="UP000000803"/>
    </source>
</evidence>
<gene>
    <name evidence="4" type="primary">Nup133</name>
    <name evidence="8" type="ORF">CG6958</name>
</gene>
<comment type="function">
    <text evidence="3 5">Probable component of the nuclear pore complex (NPC) (Probable). Plays a role in NPC assembly and/or maintenance (PubMed:20547758).</text>
</comment>
<comment type="subunit">
    <text evidence="1">Forms part of the Nup107-Nup160 subcomplex in the nuclear pore.</text>
</comment>
<comment type="subcellular location">
    <subcellularLocation>
        <location evidence="1">Nucleus</location>
        <location evidence="1">Nuclear pore complex</location>
    </subcellularLocation>
    <text evidence="1">Located on both the cytoplasmic and nuclear sides of the nuclear pore.</text>
</comment>
<comment type="similarity">
    <text evidence="5">Belongs to the nucleoporin Nup133 family.</text>
</comment>
<comment type="sequence caution" evidence="5">
    <conflict type="erroneous initiation">
        <sequence resource="EMBL-CDS" id="AAK93145"/>
    </conflict>
    <text>Truncated N-terminus.</text>
</comment>
<protein>
    <recommendedName>
        <fullName evidence="5">Nuclear pore complex protein Nup133</fullName>
    </recommendedName>
    <alternativeName>
        <fullName evidence="8">133 kDa nucleoporin</fullName>
    </alternativeName>
</protein>